<evidence type="ECO:0000255" key="1">
    <source>
        <dbReference type="HAMAP-Rule" id="MF_00251"/>
    </source>
</evidence>
<evidence type="ECO:0000305" key="2"/>
<dbReference type="EMBL" id="CP000474">
    <property type="protein sequence ID" value="ABM08340.1"/>
    <property type="molecule type" value="Genomic_DNA"/>
</dbReference>
<dbReference type="SMR" id="A1R8M6"/>
<dbReference type="STRING" id="290340.AAur_2879"/>
<dbReference type="KEGG" id="aau:AAur_2879"/>
<dbReference type="eggNOG" id="COG0257">
    <property type="taxonomic scope" value="Bacteria"/>
</dbReference>
<dbReference type="HOGENOM" id="CLU_135723_3_1_11"/>
<dbReference type="OrthoDB" id="9801558at2"/>
<dbReference type="Proteomes" id="UP000000637">
    <property type="component" value="Chromosome"/>
</dbReference>
<dbReference type="GO" id="GO:1990904">
    <property type="term" value="C:ribonucleoprotein complex"/>
    <property type="evidence" value="ECO:0007669"/>
    <property type="project" value="UniProtKB-KW"/>
</dbReference>
<dbReference type="GO" id="GO:0005840">
    <property type="term" value="C:ribosome"/>
    <property type="evidence" value="ECO:0007669"/>
    <property type="project" value="UniProtKB-KW"/>
</dbReference>
<dbReference type="GO" id="GO:0003735">
    <property type="term" value="F:structural constituent of ribosome"/>
    <property type="evidence" value="ECO:0007669"/>
    <property type="project" value="InterPro"/>
</dbReference>
<dbReference type="GO" id="GO:0006412">
    <property type="term" value="P:translation"/>
    <property type="evidence" value="ECO:0007669"/>
    <property type="project" value="UniProtKB-UniRule"/>
</dbReference>
<dbReference type="HAMAP" id="MF_00251">
    <property type="entry name" value="Ribosomal_bL36"/>
    <property type="match status" value="1"/>
</dbReference>
<dbReference type="InterPro" id="IPR000473">
    <property type="entry name" value="Ribosomal_bL36"/>
</dbReference>
<dbReference type="InterPro" id="IPR035977">
    <property type="entry name" value="Ribosomal_bL36_sp"/>
</dbReference>
<dbReference type="InterPro" id="IPR047621">
    <property type="entry name" value="Ribosomal_L36_bact"/>
</dbReference>
<dbReference type="NCBIfam" id="NF002021">
    <property type="entry name" value="PRK00831.1"/>
    <property type="match status" value="1"/>
</dbReference>
<dbReference type="PANTHER" id="PTHR47781">
    <property type="entry name" value="50S RIBOSOMAL PROTEIN L36 2"/>
    <property type="match status" value="1"/>
</dbReference>
<dbReference type="PANTHER" id="PTHR47781:SF1">
    <property type="entry name" value="LARGE RIBOSOMAL SUBUNIT PROTEIN BL36B"/>
    <property type="match status" value="1"/>
</dbReference>
<dbReference type="Pfam" id="PF00444">
    <property type="entry name" value="Ribosomal_L36"/>
    <property type="match status" value="1"/>
</dbReference>
<dbReference type="SUPFAM" id="SSF57840">
    <property type="entry name" value="Ribosomal protein L36"/>
    <property type="match status" value="1"/>
</dbReference>
<feature type="chain" id="PRO_0000344643" description="Large ribosomal subunit protein bL36A">
    <location>
        <begin position="1"/>
        <end position="40"/>
    </location>
</feature>
<comment type="similarity">
    <text evidence="1">Belongs to the bacterial ribosomal protein bL36 family.</text>
</comment>
<organism>
    <name type="scientific">Paenarthrobacter aurescens (strain TC1)</name>
    <dbReference type="NCBI Taxonomy" id="290340"/>
    <lineage>
        <taxon>Bacteria</taxon>
        <taxon>Bacillati</taxon>
        <taxon>Actinomycetota</taxon>
        <taxon>Actinomycetes</taxon>
        <taxon>Micrococcales</taxon>
        <taxon>Micrococcaceae</taxon>
        <taxon>Paenarthrobacter</taxon>
    </lineage>
</organism>
<sequence>MKVRNSLRALKKIPGAQIVRRRGRTFVINKNNPRMKARQG</sequence>
<gene>
    <name evidence="1" type="primary">rpmJ1</name>
    <name type="ordered locus">AAur_2879</name>
</gene>
<proteinExistence type="inferred from homology"/>
<accession>A1R8M6</accession>
<reference key="1">
    <citation type="journal article" date="2006" name="PLoS Genet.">
        <title>Secrets of soil survival revealed by the genome sequence of Arthrobacter aurescens TC1.</title>
        <authorList>
            <person name="Mongodin E.F."/>
            <person name="Shapir N."/>
            <person name="Daugherty S.C."/>
            <person name="DeBoy R.T."/>
            <person name="Emerson J.B."/>
            <person name="Shvartzbeyn A."/>
            <person name="Radune D."/>
            <person name="Vamathevan J."/>
            <person name="Riggs F."/>
            <person name="Grinberg V."/>
            <person name="Khouri H.M."/>
            <person name="Wackett L.P."/>
            <person name="Nelson K.E."/>
            <person name="Sadowsky M.J."/>
        </authorList>
    </citation>
    <scope>NUCLEOTIDE SEQUENCE [LARGE SCALE GENOMIC DNA]</scope>
    <source>
        <strain>TC1</strain>
    </source>
</reference>
<keyword id="KW-0687">Ribonucleoprotein</keyword>
<keyword id="KW-0689">Ribosomal protein</keyword>
<protein>
    <recommendedName>
        <fullName evidence="1">Large ribosomal subunit protein bL36A</fullName>
    </recommendedName>
    <alternativeName>
        <fullName evidence="2">50S ribosomal protein L36 1</fullName>
    </alternativeName>
</protein>
<name>RL361_PAEAT</name>